<dbReference type="EMBL" id="AF277230">
    <property type="protein sequence ID" value="AAF81261.1"/>
    <property type="status" value="ALT_INIT"/>
    <property type="molecule type" value="mRNA"/>
</dbReference>
<dbReference type="EMBL" id="AB044402">
    <property type="protein sequence ID" value="BAA99539.1"/>
    <property type="molecule type" value="mRNA"/>
</dbReference>
<dbReference type="EMBL" id="AF308571">
    <property type="protein sequence ID" value="AAG40857.1"/>
    <property type="molecule type" value="mRNA"/>
</dbReference>
<dbReference type="EMBL" id="AB008193">
    <property type="protein sequence ID" value="BAB00610.1"/>
    <property type="molecule type" value="Genomic_DNA"/>
</dbReference>
<dbReference type="EMBL" id="AB029892">
    <property type="protein sequence ID" value="BAA99553.1"/>
    <property type="molecule type" value="mRNA"/>
</dbReference>
<dbReference type="EMBL" id="AB083604">
    <property type="protein sequence ID" value="BAB89317.1"/>
    <property type="molecule type" value="Genomic_DNA"/>
</dbReference>
<dbReference type="EMBL" id="AB032558">
    <property type="protein sequence ID" value="BAD83590.1"/>
    <property type="molecule type" value="mRNA"/>
</dbReference>
<dbReference type="EMBL" id="AJ278605">
    <property type="protein sequence ID" value="CAB96134.1"/>
    <property type="status" value="ALT_SEQ"/>
    <property type="molecule type" value="Genomic_DNA"/>
</dbReference>
<dbReference type="EMBL" id="AY268433">
    <property type="protein sequence ID" value="AAP23200.1"/>
    <property type="status" value="ALT_SEQ"/>
    <property type="molecule type" value="Genomic_DNA"/>
</dbReference>
<dbReference type="EMBL" id="AL096870">
    <property type="status" value="NOT_ANNOTATED_CDS"/>
    <property type="molecule type" value="Genomic_DNA"/>
</dbReference>
<dbReference type="EMBL" id="CH471078">
    <property type="protein sequence ID" value="EAW66030.1"/>
    <property type="molecule type" value="Genomic_DNA"/>
</dbReference>
<dbReference type="CCDS" id="CCDS9625.2"/>
<dbReference type="PIR" id="JC7356">
    <property type="entry name" value="JC7356"/>
</dbReference>
<dbReference type="RefSeq" id="NP_001158164.1">
    <property type="nucleotide sequence ID" value="NM_001164692.3"/>
</dbReference>
<dbReference type="RefSeq" id="NP_062813.2">
    <property type="nucleotide sequence ID" value="NM_019839.5"/>
</dbReference>
<dbReference type="SMR" id="Q9NPC1"/>
<dbReference type="BioGRID" id="121143">
    <property type="interactions" value="49"/>
</dbReference>
<dbReference type="FunCoup" id="Q9NPC1">
    <property type="interactions" value="809"/>
</dbReference>
<dbReference type="IntAct" id="Q9NPC1">
    <property type="interactions" value="46"/>
</dbReference>
<dbReference type="MINT" id="Q9NPC1"/>
<dbReference type="STRING" id="9606.ENSP00000445772"/>
<dbReference type="BindingDB" id="Q9NPC1"/>
<dbReference type="ChEMBL" id="CHEMBL3191"/>
<dbReference type="DrugBank" id="DB06248">
    <property type="generic name" value="Amelubant"/>
</dbReference>
<dbReference type="DrugBank" id="DB12961">
    <property type="generic name" value="Leukotriene B4"/>
</dbReference>
<dbReference type="DrugBank" id="DB17101">
    <property type="generic name" value="SC 41930"/>
</dbReference>
<dbReference type="GuidetoPHARMACOLOGY" id="268"/>
<dbReference type="SwissLipids" id="SLP:000001556"/>
<dbReference type="GlyCosmos" id="Q9NPC1">
    <property type="glycosylation" value="1 site, No reported glycans"/>
</dbReference>
<dbReference type="GlyGen" id="Q9NPC1">
    <property type="glycosylation" value="1 site"/>
</dbReference>
<dbReference type="iPTMnet" id="Q9NPC1"/>
<dbReference type="PhosphoSitePlus" id="Q9NPC1"/>
<dbReference type="BioMuta" id="LTB4R2"/>
<dbReference type="DMDM" id="23821812"/>
<dbReference type="MassIVE" id="Q9NPC1"/>
<dbReference type="PaxDb" id="9606-ENSP00000445772"/>
<dbReference type="PeptideAtlas" id="Q9NPC1"/>
<dbReference type="Antibodypedia" id="9159">
    <property type="antibodies" value="222 antibodies from 28 providers"/>
</dbReference>
<dbReference type="DNASU" id="56413"/>
<dbReference type="Ensembl" id="ENST00000533293.2">
    <property type="protein sequence ID" value="ENSP00000433290.1"/>
    <property type="gene ID" value="ENSG00000213906.10"/>
</dbReference>
<dbReference type="Ensembl" id="ENST00000543919.1">
    <property type="protein sequence ID" value="ENSP00000445772.1"/>
    <property type="gene ID" value="ENSG00000213906.10"/>
</dbReference>
<dbReference type="Ensembl" id="ENST00000643080.1">
    <property type="protein sequence ID" value="ENSP00000494694.1"/>
    <property type="gene ID" value="ENSG00000285203.2"/>
</dbReference>
<dbReference type="Ensembl" id="ENST00000644309.2">
    <property type="protein sequence ID" value="ENSP00000494877.1"/>
    <property type="gene ID" value="ENSG00000285203.2"/>
</dbReference>
<dbReference type="GeneID" id="56413"/>
<dbReference type="KEGG" id="hsa:56413"/>
<dbReference type="MANE-Select" id="ENST00000533293.2">
    <property type="protein sequence ID" value="ENSP00000433290.1"/>
    <property type="RefSeq nucleotide sequence ID" value="NM_019839.5"/>
    <property type="RefSeq protein sequence ID" value="NP_062813.2"/>
</dbReference>
<dbReference type="UCSC" id="uc001wor.4">
    <property type="organism name" value="human"/>
</dbReference>
<dbReference type="AGR" id="HGNC:19260"/>
<dbReference type="CTD" id="56413"/>
<dbReference type="DisGeNET" id="56413"/>
<dbReference type="GeneCards" id="LTB4R2"/>
<dbReference type="HGNC" id="HGNC:19260">
    <property type="gene designation" value="LTB4R2"/>
</dbReference>
<dbReference type="HPA" id="ENSG00000213906">
    <property type="expression patterns" value="Tissue enhanced (esophagus, skin)"/>
</dbReference>
<dbReference type="MIM" id="605773">
    <property type="type" value="gene"/>
</dbReference>
<dbReference type="neXtProt" id="NX_Q9NPC1"/>
<dbReference type="OpenTargets" id="ENSG00000213906"/>
<dbReference type="PharmGKB" id="PA134910672"/>
<dbReference type="VEuPathDB" id="HostDB:ENSG00000213906"/>
<dbReference type="eggNOG" id="KOG3656">
    <property type="taxonomic scope" value="Eukaryota"/>
</dbReference>
<dbReference type="GeneTree" id="ENSGT00950000182966"/>
<dbReference type="InParanoid" id="Q9NPC1"/>
<dbReference type="OMA" id="ICEPCHS"/>
<dbReference type="OrthoDB" id="5980579at2759"/>
<dbReference type="PAN-GO" id="Q9NPC1">
    <property type="GO annotations" value="5 GO annotations based on evolutionary models"/>
</dbReference>
<dbReference type="PhylomeDB" id="Q9NPC1"/>
<dbReference type="TreeFam" id="TF330976"/>
<dbReference type="PathwayCommons" id="Q9NPC1"/>
<dbReference type="Reactome" id="R-HSA-391906">
    <property type="pathway name" value="Leukotriene receptors"/>
</dbReference>
<dbReference type="Reactome" id="R-HSA-416476">
    <property type="pathway name" value="G alpha (q) signalling events"/>
</dbReference>
<dbReference type="SignaLink" id="Q9NPC1"/>
<dbReference type="SIGNOR" id="Q9NPC1"/>
<dbReference type="BioGRID-ORCS" id="56413">
    <property type="hits" value="127 hits in 1152 CRISPR screens"/>
</dbReference>
<dbReference type="GenomeRNAi" id="56413"/>
<dbReference type="Pharos" id="Q9NPC1">
    <property type="development level" value="Tchem"/>
</dbReference>
<dbReference type="PRO" id="PR:Q9NPC1"/>
<dbReference type="Proteomes" id="UP000005640">
    <property type="component" value="Chromosome 14"/>
</dbReference>
<dbReference type="RNAct" id="Q9NPC1">
    <property type="molecule type" value="protein"/>
</dbReference>
<dbReference type="Bgee" id="ENSG00000213906">
    <property type="expression patterns" value="Expressed in skin of abdomen and 95 other cell types or tissues"/>
</dbReference>
<dbReference type="ExpressionAtlas" id="Q9NPC1">
    <property type="expression patterns" value="baseline and differential"/>
</dbReference>
<dbReference type="GO" id="GO:0016020">
    <property type="term" value="C:membrane"/>
    <property type="evidence" value="ECO:0007005"/>
    <property type="project" value="UniProtKB"/>
</dbReference>
<dbReference type="GO" id="GO:0005654">
    <property type="term" value="C:nucleoplasm"/>
    <property type="evidence" value="ECO:0000314"/>
    <property type="project" value="HPA"/>
</dbReference>
<dbReference type="GO" id="GO:0005886">
    <property type="term" value="C:plasma membrane"/>
    <property type="evidence" value="ECO:0000314"/>
    <property type="project" value="HPA"/>
</dbReference>
<dbReference type="GO" id="GO:0008528">
    <property type="term" value="F:G protein-coupled peptide receptor activity"/>
    <property type="evidence" value="ECO:0000318"/>
    <property type="project" value="GO_Central"/>
</dbReference>
<dbReference type="GO" id="GO:0001632">
    <property type="term" value="F:leukotriene B4 receptor activity"/>
    <property type="evidence" value="ECO:0000318"/>
    <property type="project" value="GO_Central"/>
</dbReference>
<dbReference type="GO" id="GO:0004974">
    <property type="term" value="F:leukotriene receptor activity"/>
    <property type="evidence" value="ECO:0000304"/>
    <property type="project" value="ProtInc"/>
</dbReference>
<dbReference type="GO" id="GO:0006935">
    <property type="term" value="P:chemotaxis"/>
    <property type="evidence" value="ECO:0000304"/>
    <property type="project" value="ProtInc"/>
</dbReference>
<dbReference type="GO" id="GO:0051546">
    <property type="term" value="P:keratinocyte migration"/>
    <property type="evidence" value="ECO:0007669"/>
    <property type="project" value="Ensembl"/>
</dbReference>
<dbReference type="GO" id="GO:0007194">
    <property type="term" value="P:negative regulation of adenylate cyclase activity"/>
    <property type="evidence" value="ECO:0000304"/>
    <property type="project" value="ProtInc"/>
</dbReference>
<dbReference type="GO" id="GO:0007218">
    <property type="term" value="P:neuropeptide signaling pathway"/>
    <property type="evidence" value="ECO:0000318"/>
    <property type="project" value="GO_Central"/>
</dbReference>
<dbReference type="FunFam" id="1.20.1070.10:FF:000109">
    <property type="entry name" value="Leukotriene B4 receptor"/>
    <property type="match status" value="1"/>
</dbReference>
<dbReference type="Gene3D" id="1.20.1070.10">
    <property type="entry name" value="Rhodopsin 7-helix transmembrane proteins"/>
    <property type="match status" value="1"/>
</dbReference>
<dbReference type="InterPro" id="IPR000276">
    <property type="entry name" value="GPCR_Rhodpsn"/>
</dbReference>
<dbReference type="InterPro" id="IPR017452">
    <property type="entry name" value="GPCR_Rhodpsn_7TM"/>
</dbReference>
<dbReference type="InterPro" id="IPR003981">
    <property type="entry name" value="Leukotriene_B4_rcpt"/>
</dbReference>
<dbReference type="InterPro" id="IPR003982">
    <property type="entry name" value="Leukotriene_B4_typ-2_rcpt"/>
</dbReference>
<dbReference type="PANTHER" id="PTHR24230">
    <property type="entry name" value="G-PROTEIN COUPLED RECEPTOR"/>
    <property type="match status" value="1"/>
</dbReference>
<dbReference type="PANTHER" id="PTHR24230:SF8">
    <property type="entry name" value="LEUKOTRIENE B4 RECEPTOR 2"/>
    <property type="match status" value="1"/>
</dbReference>
<dbReference type="Pfam" id="PF00001">
    <property type="entry name" value="7tm_1"/>
    <property type="match status" value="1"/>
</dbReference>
<dbReference type="PRINTS" id="PR00237">
    <property type="entry name" value="GPCRRHODOPSN"/>
</dbReference>
<dbReference type="PRINTS" id="PR01478">
    <property type="entry name" value="LTB2RECEPTOR"/>
</dbReference>
<dbReference type="PRINTS" id="PR01476">
    <property type="entry name" value="LTBRECEPTOR"/>
</dbReference>
<dbReference type="SUPFAM" id="SSF81321">
    <property type="entry name" value="Family A G protein-coupled receptor-like"/>
    <property type="match status" value="1"/>
</dbReference>
<dbReference type="PROSITE" id="PS50262">
    <property type="entry name" value="G_PROTEIN_RECEP_F1_2"/>
    <property type="match status" value="1"/>
</dbReference>
<evidence type="ECO:0000255" key="1"/>
<evidence type="ECO:0000255" key="2">
    <source>
        <dbReference type="PROSITE-ProRule" id="PRU00521"/>
    </source>
</evidence>
<evidence type="ECO:0000256" key="3">
    <source>
        <dbReference type="SAM" id="MobiDB-lite"/>
    </source>
</evidence>
<evidence type="ECO:0000305" key="4"/>
<comment type="function">
    <text>Low-affinity receptor for leukotrienes including leukotriene B4. Mediates chemotaxis of granulocytes and macrophages. The response is mediated via G-proteins that activate a phosphatidylinositol-calcium second messenger system. The rank order of affinities for the leukotrienes is LTB4 &gt; 12-epi-LTB4 &gt; LTB5 &gt; LTB3.</text>
</comment>
<comment type="subcellular location">
    <subcellularLocation>
        <location>Cell membrane</location>
        <topology>Multi-pass membrane protein</topology>
    </subcellularLocation>
</comment>
<comment type="tissue specificity">
    <text>Widely expressed.</text>
</comment>
<comment type="similarity">
    <text evidence="2">Belongs to the G-protein coupled receptor 1 family.</text>
</comment>
<comment type="sequence caution" evidence="4">
    <conflict type="erroneous initiation">
        <sequence resource="EMBL-CDS" id="AAF81261"/>
    </conflict>
    <text>Extended N-terminus.</text>
</comment>
<comment type="sequence caution" evidence="4">
    <conflict type="erroneous gene model prediction">
        <sequence resource="EMBL-CDS" id="AAP23200"/>
    </conflict>
</comment>
<comment type="sequence caution" evidence="4">
    <conflict type="erroneous gene model prediction">
        <sequence resource="EMBL-CDS" id="CAB96134"/>
    </conflict>
</comment>
<protein>
    <recommendedName>
        <fullName>Leukotriene B4 receptor 2</fullName>
        <shortName>LTB4-R 2</shortName>
        <shortName>LTB4-R2</shortName>
    </recommendedName>
    <alternativeName>
        <fullName>LTB4 receptor JULF2</fullName>
    </alternativeName>
    <alternativeName>
        <fullName>Leukotriene B4 receptor BLT2</fullName>
    </alternativeName>
    <alternativeName>
        <fullName>Seven transmembrane receptor BLTR2</fullName>
    </alternativeName>
</protein>
<feature type="chain" id="PRO_0000069711" description="Leukotriene B4 receptor 2">
    <location>
        <begin position="1"/>
        <end position="358"/>
    </location>
</feature>
<feature type="topological domain" description="Extracellular" evidence="1">
    <location>
        <begin position="1"/>
        <end position="24"/>
    </location>
</feature>
<feature type="transmembrane region" description="Helical; Name=1" evidence="1">
    <location>
        <begin position="25"/>
        <end position="45"/>
    </location>
</feature>
<feature type="topological domain" description="Cytoplasmic" evidence="1">
    <location>
        <begin position="46"/>
        <end position="60"/>
    </location>
</feature>
<feature type="transmembrane region" description="Helical; Name=2" evidence="1">
    <location>
        <begin position="61"/>
        <end position="81"/>
    </location>
</feature>
<feature type="topological domain" description="Extracellular" evidence="1">
    <location>
        <begin position="82"/>
        <end position="96"/>
    </location>
</feature>
<feature type="transmembrane region" description="Helical; Name=3" evidence="1">
    <location>
        <begin position="97"/>
        <end position="117"/>
    </location>
</feature>
<feature type="topological domain" description="Cytoplasmic" evidence="1">
    <location>
        <begin position="118"/>
        <end position="140"/>
    </location>
</feature>
<feature type="transmembrane region" description="Helical; Name=4" evidence="1">
    <location>
        <begin position="141"/>
        <end position="161"/>
    </location>
</feature>
<feature type="topological domain" description="Extracellular" evidence="1">
    <location>
        <begin position="162"/>
        <end position="185"/>
    </location>
</feature>
<feature type="transmembrane region" description="Helical; Name=5" evidence="1">
    <location>
        <begin position="186"/>
        <end position="206"/>
    </location>
</feature>
<feature type="topological domain" description="Cytoplasmic" evidence="1">
    <location>
        <begin position="207"/>
        <end position="224"/>
    </location>
</feature>
<feature type="transmembrane region" description="Helical; Name=6" evidence="1">
    <location>
        <begin position="225"/>
        <end position="245"/>
    </location>
</feature>
<feature type="topological domain" description="Extracellular" evidence="1">
    <location>
        <begin position="246"/>
        <end position="275"/>
    </location>
</feature>
<feature type="transmembrane region" description="Helical; Name=7" evidence="1">
    <location>
        <begin position="276"/>
        <end position="296"/>
    </location>
</feature>
<feature type="topological domain" description="Cytoplasmic" evidence="1">
    <location>
        <begin position="297"/>
        <end position="358"/>
    </location>
</feature>
<feature type="region of interest" description="Disordered" evidence="3">
    <location>
        <begin position="311"/>
        <end position="358"/>
    </location>
</feature>
<feature type="compositionally biased region" description="Gly residues" evidence="3">
    <location>
        <begin position="338"/>
        <end position="348"/>
    </location>
</feature>
<feature type="compositionally biased region" description="Basic and acidic residues" evidence="3">
    <location>
        <begin position="349"/>
        <end position="358"/>
    </location>
</feature>
<feature type="glycosylation site" description="N-linked (GlcNAc...) asparagine" evidence="1">
    <location>
        <position position="10"/>
    </location>
</feature>
<proteinExistence type="evidence at protein level"/>
<reference key="1">
    <citation type="journal article" date="2000" name="Biochem. Biophys. Res. Commun.">
        <title>Cloning and characterization of cDNA encoding a novel human leukotriene B4 receptor.</title>
        <authorList>
            <person name="Tryselius Y."/>
            <person name="Nilsson N.E."/>
            <person name="Kotarsky K."/>
            <person name="Olde B."/>
            <person name="Owman C."/>
        </authorList>
    </citation>
    <scope>NUCLEOTIDE SEQUENCE [MRNA]</scope>
</reference>
<reference key="2">
    <citation type="journal article" date="2000" name="J. Biol. Chem.">
        <title>Molecular cloning and characterization of another leukotriene B4 receptor.</title>
        <authorList>
            <person name="Kamohara M."/>
            <person name="Takasaki J."/>
            <person name="Matsumoto M."/>
            <person name="Saito T."/>
            <person name="Ohishi T."/>
            <person name="Ishii H."/>
            <person name="Furuichi K."/>
        </authorList>
    </citation>
    <scope>NUCLEOTIDE SEQUENCE [MRNA]</scope>
</reference>
<reference key="3">
    <citation type="journal article" date="2000" name="J. Biol. Chem.">
        <title>A novel hepatointestinal leukotriene B4 receptor: cloning and functional characterization.</title>
        <authorList>
            <person name="Wang S."/>
            <person name="Gustafson E."/>
            <person name="Pang L."/>
            <person name="Qiao X."/>
            <person name="Behan J."/>
            <person name="Maguire M."/>
            <person name="Bayne M."/>
            <person name="Laz T."/>
        </authorList>
    </citation>
    <scope>NUCLEOTIDE SEQUENCE [MRNA]</scope>
</reference>
<reference key="4">
    <citation type="journal article" date="2000" name="J. Exp. Med.">
        <title>A second leukotriene B4 receptor, BLT2: a new therapeutic target in inflammation and immunological disorders.</title>
        <authorList>
            <person name="Yokomizo T."/>
            <person name="Kato K."/>
            <person name="Terawaki K."/>
            <person name="Izumi T."/>
            <person name="Shimizu T."/>
        </authorList>
    </citation>
    <scope>NUCLEOTIDE SEQUENCE [GENOMIC DNA / MRNA]</scope>
</reference>
<reference key="5">
    <citation type="journal article" date="2002" name="FEBS Lett.">
        <title>Identification of G protein-coupled receptor genes from the human genome sequence.</title>
        <authorList>
            <person name="Takeda S."/>
            <person name="Kadowaki S."/>
            <person name="Haga T."/>
            <person name="Takaesu H."/>
            <person name="Mitaku S."/>
        </authorList>
    </citation>
    <scope>NUCLEOTIDE SEQUENCE [GENOMIC DNA]</scope>
</reference>
<reference key="6">
    <citation type="submission" date="1999-09" db="EMBL/GenBank/DDBJ databases">
        <title>Probable G-protein coupled receptor.</title>
        <authorList>
            <person name="Hirose M."/>
            <person name="Urakawa I."/>
            <person name="Yamano S."/>
            <person name="Okazaki H."/>
        </authorList>
    </citation>
    <scope>NUCLEOTIDE SEQUENCE [MRNA]</scope>
</reference>
<reference key="7">
    <citation type="submission" date="2000-06" db="EMBL/GenBank/DDBJ databases">
        <title>Identification and characterisation of a novel LTB4 receptor.</title>
        <authorList>
            <person name="Volpe F."/>
            <person name="Patel K."/>
            <person name="Barnes A."/>
            <person name="Sanseau P."/>
            <person name="Cousens D."/>
            <person name="Green A."/>
            <person name="Marshall F."/>
        </authorList>
    </citation>
    <scope>NUCLEOTIDE SEQUENCE [GENOMIC DNA]</scope>
</reference>
<reference key="8">
    <citation type="submission" date="2003-04" db="EMBL/GenBank/DDBJ databases">
        <title>cDNA clones of human proteins involved in signal transduction sequenced by the Guthrie cDNA resource center (www.cdna.org).</title>
        <authorList>
            <person name="Kopatz S.A."/>
            <person name="Aronstam R.S."/>
            <person name="Sharma S.V."/>
        </authorList>
    </citation>
    <scope>NUCLEOTIDE SEQUENCE [LARGE SCALE MRNA]</scope>
</reference>
<reference key="9">
    <citation type="journal article" date="2003" name="Nature">
        <title>The DNA sequence and analysis of human chromosome 14.</title>
        <authorList>
            <person name="Heilig R."/>
            <person name="Eckenberg R."/>
            <person name="Petit J.-L."/>
            <person name="Fonknechten N."/>
            <person name="Da Silva C."/>
            <person name="Cattolico L."/>
            <person name="Levy M."/>
            <person name="Barbe V."/>
            <person name="De Berardinis V."/>
            <person name="Ureta-Vidal A."/>
            <person name="Pelletier E."/>
            <person name="Vico V."/>
            <person name="Anthouard V."/>
            <person name="Rowen L."/>
            <person name="Madan A."/>
            <person name="Qin S."/>
            <person name="Sun H."/>
            <person name="Du H."/>
            <person name="Pepin K."/>
            <person name="Artiguenave F."/>
            <person name="Robert C."/>
            <person name="Cruaud C."/>
            <person name="Bruels T."/>
            <person name="Jaillon O."/>
            <person name="Friedlander L."/>
            <person name="Samson G."/>
            <person name="Brottier P."/>
            <person name="Cure S."/>
            <person name="Segurens B."/>
            <person name="Aniere F."/>
            <person name="Samain S."/>
            <person name="Crespeau H."/>
            <person name="Abbasi N."/>
            <person name="Aiach N."/>
            <person name="Boscus D."/>
            <person name="Dickhoff R."/>
            <person name="Dors M."/>
            <person name="Dubois I."/>
            <person name="Friedman C."/>
            <person name="Gouyvenoux M."/>
            <person name="James R."/>
            <person name="Madan A."/>
            <person name="Mairey-Estrada B."/>
            <person name="Mangenot S."/>
            <person name="Martins N."/>
            <person name="Menard M."/>
            <person name="Oztas S."/>
            <person name="Ratcliffe A."/>
            <person name="Shaffer T."/>
            <person name="Trask B."/>
            <person name="Vacherie B."/>
            <person name="Bellemere C."/>
            <person name="Belser C."/>
            <person name="Besnard-Gonnet M."/>
            <person name="Bartol-Mavel D."/>
            <person name="Boutard M."/>
            <person name="Briez-Silla S."/>
            <person name="Combette S."/>
            <person name="Dufosse-Laurent V."/>
            <person name="Ferron C."/>
            <person name="Lechaplais C."/>
            <person name="Louesse C."/>
            <person name="Muselet D."/>
            <person name="Magdelenat G."/>
            <person name="Pateau E."/>
            <person name="Petit E."/>
            <person name="Sirvain-Trukniewicz P."/>
            <person name="Trybou A."/>
            <person name="Vega-Czarny N."/>
            <person name="Bataille E."/>
            <person name="Bluet E."/>
            <person name="Bordelais I."/>
            <person name="Dubois M."/>
            <person name="Dumont C."/>
            <person name="Guerin T."/>
            <person name="Haffray S."/>
            <person name="Hammadi R."/>
            <person name="Muanga J."/>
            <person name="Pellouin V."/>
            <person name="Robert D."/>
            <person name="Wunderle E."/>
            <person name="Gauguet G."/>
            <person name="Roy A."/>
            <person name="Sainte-Marthe L."/>
            <person name="Verdier J."/>
            <person name="Verdier-Discala C."/>
            <person name="Hillier L.W."/>
            <person name="Fulton L."/>
            <person name="McPherson J."/>
            <person name="Matsuda F."/>
            <person name="Wilson R."/>
            <person name="Scarpelli C."/>
            <person name="Gyapay G."/>
            <person name="Wincker P."/>
            <person name="Saurin W."/>
            <person name="Quetier F."/>
            <person name="Waterston R."/>
            <person name="Hood L."/>
            <person name="Weissenbach J."/>
        </authorList>
    </citation>
    <scope>NUCLEOTIDE SEQUENCE [LARGE SCALE GENOMIC DNA]</scope>
</reference>
<reference key="10">
    <citation type="submission" date="2005-09" db="EMBL/GenBank/DDBJ databases">
        <authorList>
            <person name="Mural R.J."/>
            <person name="Istrail S."/>
            <person name="Sutton G."/>
            <person name="Florea L."/>
            <person name="Halpern A.L."/>
            <person name="Mobarry C.M."/>
            <person name="Lippert R."/>
            <person name="Walenz B."/>
            <person name="Shatkay H."/>
            <person name="Dew I."/>
            <person name="Miller J.R."/>
            <person name="Flanigan M.J."/>
            <person name="Edwards N.J."/>
            <person name="Bolanos R."/>
            <person name="Fasulo D."/>
            <person name="Halldorsson B.V."/>
            <person name="Hannenhalli S."/>
            <person name="Turner R."/>
            <person name="Yooseph S."/>
            <person name="Lu F."/>
            <person name="Nusskern D.R."/>
            <person name="Shue B.C."/>
            <person name="Zheng X.H."/>
            <person name="Zhong F."/>
            <person name="Delcher A.L."/>
            <person name="Huson D.H."/>
            <person name="Kravitz S.A."/>
            <person name="Mouchard L."/>
            <person name="Reinert K."/>
            <person name="Remington K.A."/>
            <person name="Clark A.G."/>
            <person name="Waterman M.S."/>
            <person name="Eichler E.E."/>
            <person name="Adams M.D."/>
            <person name="Hunkapiller M.W."/>
            <person name="Myers E.W."/>
            <person name="Venter J.C."/>
        </authorList>
    </citation>
    <scope>NUCLEOTIDE SEQUENCE [LARGE SCALE GENOMIC DNA]</scope>
</reference>
<organism>
    <name type="scientific">Homo sapiens</name>
    <name type="common">Human</name>
    <dbReference type="NCBI Taxonomy" id="9606"/>
    <lineage>
        <taxon>Eukaryota</taxon>
        <taxon>Metazoa</taxon>
        <taxon>Chordata</taxon>
        <taxon>Craniata</taxon>
        <taxon>Vertebrata</taxon>
        <taxon>Euteleostomi</taxon>
        <taxon>Mammalia</taxon>
        <taxon>Eutheria</taxon>
        <taxon>Euarchontoglires</taxon>
        <taxon>Primates</taxon>
        <taxon>Haplorrhini</taxon>
        <taxon>Catarrhini</taxon>
        <taxon>Hominidae</taxon>
        <taxon>Homo</taxon>
    </lineage>
</organism>
<gene>
    <name type="primary">LTB4R2</name>
    <name type="synonym">BLT2R</name>
    <name type="synonym">BLTR2</name>
</gene>
<name>LT4R2_HUMAN</name>
<sequence length="358" mass="37942">MSVCYRPPGNETLLSWKTSRATGTAFLLLAALLGLPGNGFVVWSLAGWRPARGRPLAATLVLHLALADGAVLLLTPLFVAFLTRQAWPLGQAGCKAVYYVCALSMYASVLLTGLLSLQRCLAVTRPFLAPRLRSPALARRLLLAVWLAALLLAVPAAVYRHLWRDRVCQLCHPSPVHAAAHLSLETLTAFVLPFGLMLGCYSVTLARLRGARWGSGRHGARVGRLVSAIVLAFGLLWAPYHAVNLLQAVAALAPPEGALAKLGGAGQAARAGTTALAFFSSSVNPVLYVFTAGDLLPRAGPRFLTRLFEGSGEARGGGRSREGTMELRTTPQLKVVGQGRGNGDPGGGMEKDGPEWDL</sequence>
<accession>Q9NPC1</accession>
<accession>Q5KU28</accession>
<accession>Q9NPE5</accession>
<keyword id="KW-1003">Cell membrane</keyword>
<keyword id="KW-0297">G-protein coupled receptor</keyword>
<keyword id="KW-0325">Glycoprotein</keyword>
<keyword id="KW-0472">Membrane</keyword>
<keyword id="KW-1267">Proteomics identification</keyword>
<keyword id="KW-0675">Receptor</keyword>
<keyword id="KW-1185">Reference proteome</keyword>
<keyword id="KW-0807">Transducer</keyword>
<keyword id="KW-0812">Transmembrane</keyword>
<keyword id="KW-1133">Transmembrane helix</keyword>